<organism>
    <name type="scientific">Staphylococcus aureus (strain NCTC 8325 / PS 47)</name>
    <dbReference type="NCBI Taxonomy" id="93061"/>
    <lineage>
        <taxon>Bacteria</taxon>
        <taxon>Bacillati</taxon>
        <taxon>Bacillota</taxon>
        <taxon>Bacilli</taxon>
        <taxon>Bacillales</taxon>
        <taxon>Staphylococcaceae</taxon>
        <taxon>Staphylococcus</taxon>
    </lineage>
</organism>
<protein>
    <recommendedName>
        <fullName evidence="5">Ribosomal processing cysteine protease Prp</fullName>
        <ecNumber evidence="1">3.4.22.-</ecNumber>
    </recommendedName>
    <alternativeName>
        <fullName evidence="4">Phage-related ribosomal protease</fullName>
        <shortName evidence="4">Prp</shortName>
    </alternativeName>
</protein>
<comment type="function">
    <text evidence="1 2 8 9">An essential cysteine protease that cleaves the N-terminal 9 amino acids from ribosomal protein bL27 (PubMed:25388641). Also acts as an N-terminal protease on the major capsid and scaffold assembly proteins of bacteriophage 80alpha (PubMed:25388641). Cleavage of the N-terminus of bL27 (and thus this enzyme) is essential for growth; it cannot be replaced by a 'pre-cleaved' or non-cleavable form of bL27 (PubMed:25388641, PubMed:28187498). Might serve a chaperone function during ribosome assembly (Probable) (PubMed:28187498, PubMed:35731716).</text>
</comment>
<comment type="activity regulation">
    <text evidence="2 3">Not inhibited by short peptide analogs; a 6-mer inhibits only 20% while a 13-mer inhibits 63% (PubMed:28187498). Inhibited by Ac-KLNLQFF-CH(2) which binds covalantly to Cys-34 (PubMed:35731716). Inhibited by mersalyl acid (C13H18HgNO6) (PubMed:35731716).</text>
</comment>
<comment type="biophysicochemical properties">
    <kinetics>
        <KM evidence="2">0.1824 uM for 2-aminobenzoic acid-KLNLQFFASKK dinitrophenol</KM>
        <KM evidence="3">3.4 uM for FITC-KLNLQFFASKK-Dnp</KM>
        <text evidence="2 3">kcat is 0.0458 sec(-1) for 2-aminobenzoic acid-KLNLQFFASKK-Dnp (PubMed:28187498). kcat is 0.26 sec(-1) for FITC-KLNLQFFASKK-Dnp (PubMed:35731716).</text>
    </kinetics>
    <phDependence>
        <text evidence="2">Optimum pH is 7.0.</text>
    </phDependence>
</comment>
<comment type="subunit">
    <text evidence="1 2 3">Homodimer (PubMed:28187498, PubMed:35731716). A mutant protein unable to cleave bL27 copurifies with its substrate (PubMed:25388641).</text>
</comment>
<comment type="domain">
    <text evidence="3">Local conformational changes induced by substrate binding confer activity on the enzyme, organizing disordered segment Gly-21 to Gly-26 and allowing positioning of His-22.</text>
</comment>
<comment type="disruption phenotype">
    <text evidence="1">Essential, it cannot be disrupted (PubMed:25388641).</text>
</comment>
<comment type="biotechnology">
    <text evidence="7 8">Could be a possible drug target as it is unique to certain bacterial groups.</text>
</comment>
<comment type="similarity">
    <text evidence="6">Belongs to the Prp family.</text>
</comment>
<gene>
    <name evidence="4" type="primary">prp</name>
    <name type="ordered locus">SAOUHSC_01756</name>
</gene>
<evidence type="ECO:0000269" key="1">
    <source>
    </source>
</evidence>
<evidence type="ECO:0000269" key="2">
    <source>
    </source>
</evidence>
<evidence type="ECO:0000269" key="3">
    <source>
    </source>
</evidence>
<evidence type="ECO:0000303" key="4">
    <source>
    </source>
</evidence>
<evidence type="ECO:0000303" key="5">
    <source>
    </source>
</evidence>
<evidence type="ECO:0000305" key="6"/>
<evidence type="ECO:0000305" key="7">
    <source>
    </source>
</evidence>
<evidence type="ECO:0000305" key="8">
    <source>
    </source>
</evidence>
<evidence type="ECO:0000305" key="9">
    <source>
    </source>
</evidence>
<evidence type="ECO:0000312" key="10">
    <source>
        <dbReference type="EMBL" id="ABD30825.1"/>
    </source>
</evidence>
<evidence type="ECO:0007744" key="11">
    <source>
        <dbReference type="PDB" id="7JVS"/>
    </source>
</evidence>
<evidence type="ECO:0007744" key="12">
    <source>
        <dbReference type="PDB" id="7KLD"/>
    </source>
</evidence>
<evidence type="ECO:0007829" key="13">
    <source>
        <dbReference type="PDB" id="7KLD"/>
    </source>
</evidence>
<proteinExistence type="evidence at protein level"/>
<feature type="chain" id="PRO_0000459838" description="Ribosomal processing cysteine protease Prp">
    <location>
        <begin position="1"/>
        <end position="106"/>
    </location>
</feature>
<feature type="active site" description="Proton donor" evidence="7 9">
    <location>
        <position position="22"/>
    </location>
</feature>
<feature type="active site" description="Nucleophile" evidence="7 9">
    <location>
        <position position="34"/>
    </location>
</feature>
<feature type="mutagenesis site" description="No peptidase activity, very poor substrate binding." evidence="2">
    <original>G</original>
    <variation>A</variation>
    <location>
        <position position="21"/>
    </location>
</feature>
<feature type="mutagenesis site" description="No peptidase activity, reduced substrate binding." evidence="2">
    <original>H</original>
    <variation>A</variation>
    <location>
        <position position="22"/>
    </location>
</feature>
<feature type="mutagenesis site" description="No peptidase activity, reduced substrate binding." evidence="2">
    <original>D</original>
    <variation>A</variation>
    <location>
        <position position="31"/>
    </location>
</feature>
<feature type="mutagenesis site" description="No longer cleaves the N-terminus of bL27, tightly copurifies with bL27, growth inhibition upon overexpression, aberrant pre-50S ribosomal subunit assembly, 50% decrease in 70S ribosomes." evidence="1">
    <original>C</original>
    <variation>A</variation>
    <location>
        <position position="34"/>
    </location>
</feature>
<feature type="mutagenesis site" description="No peptidase activity, binds substrate." evidence="2">
    <original>C</original>
    <variation>S</variation>
    <location>
        <position position="34"/>
    </location>
</feature>
<feature type="mutagenesis site" description="2% peptidase activity, reduced substrate binding." evidence="2">
    <original>S</original>
    <variation>A</variation>
    <location>
        <position position="38"/>
    </location>
</feature>
<feature type="strand" evidence="13">
    <location>
        <begin position="2"/>
        <end position="8"/>
    </location>
</feature>
<feature type="strand" evidence="13">
    <location>
        <begin position="14"/>
        <end position="21"/>
    </location>
</feature>
<feature type="helix" evidence="13">
    <location>
        <begin position="32"/>
        <end position="51"/>
    </location>
</feature>
<feature type="strand" evidence="13">
    <location>
        <begin position="57"/>
        <end position="60"/>
    </location>
</feature>
<feature type="strand" evidence="13">
    <location>
        <begin position="64"/>
        <end position="70"/>
    </location>
</feature>
<feature type="helix" evidence="13">
    <location>
        <begin position="77"/>
        <end position="96"/>
    </location>
</feature>
<feature type="turn" evidence="13">
    <location>
        <begin position="98"/>
        <end position="100"/>
    </location>
</feature>
<feature type="strand" evidence="13">
    <location>
        <begin position="101"/>
        <end position="105"/>
    </location>
</feature>
<sequence>MITVDITVNDEGKVTDVIMDGHADHGEYGHDIVCAGASAVLFGSVNAIIGLTSERPDINYDDNGGHFHIRSVDTNNDEAQLILQTMLVSLQTIEEEYNENIRLNYK</sequence>
<keyword id="KW-0002">3D-structure</keyword>
<keyword id="KW-0378">Hydrolase</keyword>
<keyword id="KW-0645">Protease</keyword>
<keyword id="KW-1185">Reference proteome</keyword>
<keyword id="KW-0690">Ribosome biogenesis</keyword>
<keyword id="KW-0788">Thiol protease</keyword>
<reference evidence="10" key="1">
    <citation type="book" date="2006" name="Gram positive pathogens, 2nd edition">
        <title>The Staphylococcus aureus NCTC 8325 genome.</title>
        <editorList>
            <person name="Fischetti V."/>
            <person name="Novick R."/>
            <person name="Ferretti J."/>
            <person name="Portnoy D."/>
            <person name="Rood J."/>
        </editorList>
        <authorList>
            <person name="Gillaspy A.F."/>
            <person name="Worrell V."/>
            <person name="Orvis J."/>
            <person name="Roe B.A."/>
            <person name="Dyer D.W."/>
            <person name="Iandolo J.J."/>
        </authorList>
    </citation>
    <scope>NUCLEOTIDE SEQUENCE [LARGE SCALE GENOMIC DNA]</scope>
    <source>
        <strain>NCTC 8325 / PS 47</strain>
    </source>
</reference>
<reference key="2">
    <citation type="journal article" date="2015" name="Mol. Microbiol.">
        <title>Specific N-terminal cleavage of ribosomal protein L27 in Staphylococcus aureus and related bacteria.</title>
        <authorList>
            <person name="Wall E.A."/>
            <person name="Caufield J.H."/>
            <person name="Lyons C.E."/>
            <person name="Manning K.A."/>
            <person name="Dokland T."/>
            <person name="Christie G.E."/>
        </authorList>
    </citation>
    <scope>FUNCTION</scope>
    <scope>PROBABLE ACTIVE SITES</scope>
    <scope>CATALYTIC ACTIVITY</scope>
    <scope>DISRUPTION PHENOTYPE</scope>
    <scope>MUTAGENESIS OF CYS-34</scope>
    <source>
        <strain>RN4220</strain>
    </source>
</reference>
<reference key="3">
    <citation type="journal article" date="2017" name="Mol. Microbiol.">
        <title>Structural modeling and functional analysis of the essential ribosomal processing protease Prp from Staphylococcus aureus.</title>
        <authorList>
            <person name="Wall E.A."/>
            <person name="Johnson A.L."/>
            <person name="Peterson D.L."/>
            <person name="Christie G.E."/>
        </authorList>
    </citation>
    <scope>FUNCTION</scope>
    <scope>CATALYTIC ACTIVITY</scope>
    <scope>ACTIVITY REGULATION</scope>
    <scope>BIOPHYSICOCHEMICAL PROPERTIES</scope>
    <scope>SUBUNIT</scope>
    <scope>BIOTECHNOLOGY</scope>
    <scope>MUTAGENESIS OF GLY-21; HIS-22; ASP-31; CYS-34 AND SER-38</scope>
    <source>
        <strain>RN4220</strain>
    </source>
</reference>
<reference evidence="11" key="4">
    <citation type="submission" date="2020-08" db="PDB data bank">
        <title>Crystal Structure of an Essential Ribosomal Processing Protease Prp from S. aureus in complex with a Substrate Peptide.</title>
        <authorList>
            <person name="Wright H.T."/>
            <person name="Peterson D."/>
            <person name="Christie G."/>
        </authorList>
    </citation>
    <scope>X-RAY CRYSTALLOGRAPHY (2.30 ANGSTROMS) IN COMPLEX WITH PEPTIDE</scope>
</reference>
<reference evidence="12" key="5">
    <citation type="journal article" date="2022" name="Biochemistry">
        <title>Phage-Related Ribosomal Protease (Prp) of Staphylococcus aureus: In Vitro Michaelis-Menten Kinetics, Screening for Inhibitors, and Crystal Structure of a Covalent Inhibition Product Complex.</title>
        <authorList>
            <person name="Hotinger J.A."/>
            <person name="Pendergrass H.A."/>
            <person name="Peterson D."/>
            <person name="Wright H.T."/>
            <person name="May A.E."/>
        </authorList>
    </citation>
    <scope>X-RAY CRYSTALLOGRAPHY (2.25 ANGSTROMS) IN COMPLEX WITH INHIBITOR</scope>
    <scope>FUNCTION</scope>
    <scope>CATALYTIC ACTIVITY</scope>
    <scope>ACTIVE SITES</scope>
    <scope>ACTIVITY REGULATION</scope>
    <scope>BIOPHYSICOCHEMICAL PROPERTIES</scope>
    <scope>SUBUNIT</scope>
    <scope>DOMAIN</scope>
</reference>
<accession>Q2FXS9</accession>
<name>PRP_STAA8</name>
<dbReference type="EC" id="3.4.22.-" evidence="1"/>
<dbReference type="EMBL" id="CP000253">
    <property type="protein sequence ID" value="ABD30825.1"/>
    <property type="molecule type" value="Genomic_DNA"/>
</dbReference>
<dbReference type="RefSeq" id="WP_000633692.1">
    <property type="nucleotide sequence ID" value="NZ_LS483365.1"/>
</dbReference>
<dbReference type="RefSeq" id="YP_500261.1">
    <property type="nucleotide sequence ID" value="NC_007795.1"/>
</dbReference>
<dbReference type="PDB" id="7JVS">
    <property type="method" value="X-ray"/>
    <property type="resolution" value="2.30 A"/>
    <property type="chains" value="B/D=1-106"/>
</dbReference>
<dbReference type="PDB" id="7KLD">
    <property type="method" value="X-ray"/>
    <property type="resolution" value="2.25 A"/>
    <property type="chains" value="A/B/D=1-106"/>
</dbReference>
<dbReference type="PDBsum" id="7JVS"/>
<dbReference type="PDBsum" id="7KLD"/>
<dbReference type="SMR" id="Q2FXS9"/>
<dbReference type="STRING" id="93061.SAOUHSC_01756"/>
<dbReference type="PaxDb" id="1280-SAXN108_1673"/>
<dbReference type="GeneID" id="3920554"/>
<dbReference type="KEGG" id="sao:SAOUHSC_01756"/>
<dbReference type="PATRIC" id="fig|93061.5.peg.1599"/>
<dbReference type="eggNOG" id="COG2868">
    <property type="taxonomic scope" value="Bacteria"/>
</dbReference>
<dbReference type="HOGENOM" id="CLU_140910_1_0_9"/>
<dbReference type="OrthoDB" id="48998at2"/>
<dbReference type="EvolutionaryTrace" id="Q2FXS9"/>
<dbReference type="Proteomes" id="UP000008816">
    <property type="component" value="Chromosome"/>
</dbReference>
<dbReference type="GO" id="GO:0008234">
    <property type="term" value="F:cysteine-type peptidase activity"/>
    <property type="evidence" value="ECO:0007669"/>
    <property type="project" value="UniProtKB-KW"/>
</dbReference>
<dbReference type="GO" id="GO:0006508">
    <property type="term" value="P:proteolysis"/>
    <property type="evidence" value="ECO:0007669"/>
    <property type="project" value="UniProtKB-KW"/>
</dbReference>
<dbReference type="GO" id="GO:0042254">
    <property type="term" value="P:ribosome biogenesis"/>
    <property type="evidence" value="ECO:0007669"/>
    <property type="project" value="UniProtKB-KW"/>
</dbReference>
<dbReference type="CDD" id="cd16332">
    <property type="entry name" value="Prp-like"/>
    <property type="match status" value="1"/>
</dbReference>
<dbReference type="Gene3D" id="3.30.70.1490">
    <property type="entry name" value="Cysteine protease Prp"/>
    <property type="match status" value="1"/>
</dbReference>
<dbReference type="InterPro" id="IPR007422">
    <property type="entry name" value="Peptidase_Prp"/>
</dbReference>
<dbReference type="InterPro" id="IPR036764">
    <property type="entry name" value="Peptidase_Prp_sf"/>
</dbReference>
<dbReference type="PANTHER" id="PTHR39178">
    <property type="entry name" value="HYPOTHETICAL RIBOSOME-ASSOCIATED PROTEIN"/>
    <property type="match status" value="1"/>
</dbReference>
<dbReference type="PANTHER" id="PTHR39178:SF1">
    <property type="entry name" value="RIBOSOMAL-PROCESSING CYSTEINE PROTEASE PRP"/>
    <property type="match status" value="1"/>
</dbReference>
<dbReference type="Pfam" id="PF04327">
    <property type="entry name" value="Peptidase_Prp"/>
    <property type="match status" value="1"/>
</dbReference>
<dbReference type="SUPFAM" id="SSF118010">
    <property type="entry name" value="TM1457-like"/>
    <property type="match status" value="1"/>
</dbReference>